<reference key="1">
    <citation type="journal article" date="1998" name="Mol. Vis.">
        <title>Interaction of phosducin and phosducin isoforms with a 26S proteasomal subunit, SUG1.</title>
        <authorList>
            <person name="Zhu X."/>
            <person name="Craft C.M."/>
        </authorList>
    </citation>
    <scope>NUCLEOTIDE SEQUENCE [MRNA]</scope>
</reference>
<reference key="2">
    <citation type="submission" date="2007-06" db="EMBL/GenBank/DDBJ databases">
        <authorList>
            <consortium name="NIH - Mammalian Gene Collection (MGC) project"/>
        </authorList>
    </citation>
    <scope>NUCLEOTIDE SEQUENCE [LARGE SCALE MRNA]</scope>
    <source>
        <strain>Hereford</strain>
        <tissue>Brain cortex</tissue>
    </source>
</reference>
<accession>P62194</accession>
<accession>A6H7C5</accession>
<accession>O35051</accession>
<accession>P47210</accession>
<accession>P52915</accession>
<accession>P52916</accession>
<feature type="initiator methionine" description="Removed" evidence="1">
    <location>
        <position position="1"/>
    </location>
</feature>
<feature type="chain" id="PRO_0000084720" description="26S proteasome regulatory subunit 8">
    <location>
        <begin position="2"/>
        <end position="406"/>
    </location>
</feature>
<feature type="region of interest" description="May mediate interaction with PRPF9" evidence="2">
    <location>
        <begin position="186"/>
        <end position="406"/>
    </location>
</feature>
<feature type="binding site" evidence="4">
    <location>
        <begin position="190"/>
        <end position="197"/>
    </location>
    <ligand>
        <name>ATP</name>
        <dbReference type="ChEBI" id="CHEBI:30616"/>
    </ligand>
</feature>
<feature type="modified residue" description="N-acetylalanine" evidence="1">
    <location>
        <position position="2"/>
    </location>
</feature>
<feature type="modified residue" description="Phosphoserine" evidence="1">
    <location>
        <position position="120"/>
    </location>
</feature>
<feature type="modified residue" description="N6-acetyllysine" evidence="1">
    <location>
        <position position="222"/>
    </location>
</feature>
<dbReference type="EMBL" id="AF069053">
    <property type="protein sequence ID" value="AAC19266.1"/>
    <property type="molecule type" value="mRNA"/>
</dbReference>
<dbReference type="EMBL" id="BC146195">
    <property type="protein sequence ID" value="AAI46196.1"/>
    <property type="molecule type" value="mRNA"/>
</dbReference>
<dbReference type="RefSeq" id="NP_776866.1">
    <property type="nucleotide sequence ID" value="NM_174441.2"/>
</dbReference>
<dbReference type="BMRB" id="P62194"/>
<dbReference type="SMR" id="P62194"/>
<dbReference type="BioGRID" id="159304">
    <property type="interactions" value="1"/>
</dbReference>
<dbReference type="FunCoup" id="P62194">
    <property type="interactions" value="3418"/>
</dbReference>
<dbReference type="STRING" id="9913.ENSBTAP00000028048"/>
<dbReference type="PaxDb" id="9913-ENSBTAP00000028048"/>
<dbReference type="PeptideAtlas" id="P62194"/>
<dbReference type="Ensembl" id="ENSBTAT00000028048.6">
    <property type="protein sequence ID" value="ENSBTAP00000028048.4"/>
    <property type="gene ID" value="ENSBTAG00000021061.7"/>
</dbReference>
<dbReference type="GeneID" id="282015"/>
<dbReference type="KEGG" id="bta:282015"/>
<dbReference type="CTD" id="5705"/>
<dbReference type="VEuPathDB" id="HostDB:ENSBTAG00000021061"/>
<dbReference type="VGNC" id="VGNC:33459">
    <property type="gene designation" value="PSMC5"/>
</dbReference>
<dbReference type="eggNOG" id="KOG0728">
    <property type="taxonomic scope" value="Eukaryota"/>
</dbReference>
<dbReference type="GeneTree" id="ENSGT01020000230346"/>
<dbReference type="HOGENOM" id="CLU_000688_2_0_1"/>
<dbReference type="InParanoid" id="P62194"/>
<dbReference type="OMA" id="REPAVIF"/>
<dbReference type="OrthoDB" id="1154031at2759"/>
<dbReference type="Reactome" id="R-BTA-1169091">
    <property type="pathway name" value="Activation of NF-kappaB in B cells"/>
</dbReference>
<dbReference type="Reactome" id="R-BTA-1234176">
    <property type="pathway name" value="Oxygen-dependent proline hydroxylation of Hypoxia-inducible Factor Alpha"/>
</dbReference>
<dbReference type="Reactome" id="R-BTA-1236978">
    <property type="pathway name" value="Cross-presentation of soluble exogenous antigens (endosomes)"/>
</dbReference>
<dbReference type="Reactome" id="R-BTA-174084">
    <property type="pathway name" value="Autodegradation of Cdh1 by Cdh1:APC/C"/>
</dbReference>
<dbReference type="Reactome" id="R-BTA-174154">
    <property type="pathway name" value="APC/C:Cdc20 mediated degradation of Securin"/>
</dbReference>
<dbReference type="Reactome" id="R-BTA-174178">
    <property type="pathway name" value="APC/C:Cdh1 mediated degradation of Cdc20 and other APC/C:Cdh1 targeted proteins in late mitosis/early G1"/>
</dbReference>
<dbReference type="Reactome" id="R-BTA-174184">
    <property type="pathway name" value="Cdc20:Phospho-APC/C mediated degradation of Cyclin A"/>
</dbReference>
<dbReference type="Reactome" id="R-BTA-187577">
    <property type="pathway name" value="SCF(Skp2)-mediated degradation of p27/p21"/>
</dbReference>
<dbReference type="Reactome" id="R-BTA-195253">
    <property type="pathway name" value="Degradation of beta-catenin by the destruction complex"/>
</dbReference>
<dbReference type="Reactome" id="R-BTA-202424">
    <property type="pathway name" value="Downstream TCR signaling"/>
</dbReference>
<dbReference type="Reactome" id="R-BTA-2467813">
    <property type="pathway name" value="Separation of Sister Chromatids"/>
</dbReference>
<dbReference type="Reactome" id="R-BTA-2871837">
    <property type="pathway name" value="FCERI mediated NF-kB activation"/>
</dbReference>
<dbReference type="Reactome" id="R-BTA-349425">
    <property type="pathway name" value="Autodegradation of the E3 ubiquitin ligase COP1"/>
</dbReference>
<dbReference type="Reactome" id="R-BTA-350562">
    <property type="pathway name" value="Regulation of ornithine decarboxylase (ODC)"/>
</dbReference>
<dbReference type="Reactome" id="R-BTA-382556">
    <property type="pathway name" value="ABC-family proteins mediated transport"/>
</dbReference>
<dbReference type="Reactome" id="R-BTA-450408">
    <property type="pathway name" value="AUF1 (hnRNP D0) binds and destabilizes mRNA"/>
</dbReference>
<dbReference type="Reactome" id="R-BTA-4608870">
    <property type="pathway name" value="Asymmetric localization of PCP proteins"/>
</dbReference>
<dbReference type="Reactome" id="R-BTA-4641257">
    <property type="pathway name" value="Degradation of AXIN"/>
</dbReference>
<dbReference type="Reactome" id="R-BTA-4641258">
    <property type="pathway name" value="Degradation of DVL"/>
</dbReference>
<dbReference type="Reactome" id="R-BTA-5358346">
    <property type="pathway name" value="Hedgehog ligand biogenesis"/>
</dbReference>
<dbReference type="Reactome" id="R-BTA-5607761">
    <property type="pathway name" value="Dectin-1 mediated noncanonical NF-kB signaling"/>
</dbReference>
<dbReference type="Reactome" id="R-BTA-5607764">
    <property type="pathway name" value="CLEC7A (Dectin-1) signaling"/>
</dbReference>
<dbReference type="Reactome" id="R-BTA-5610780">
    <property type="pathway name" value="Degradation of GLI1 by the proteasome"/>
</dbReference>
<dbReference type="Reactome" id="R-BTA-5610785">
    <property type="pathway name" value="GLI3 is processed to GLI3R by the proteasome"/>
</dbReference>
<dbReference type="Reactome" id="R-BTA-5632684">
    <property type="pathway name" value="Hedgehog 'on' state"/>
</dbReference>
<dbReference type="Reactome" id="R-BTA-5668541">
    <property type="pathway name" value="TNFR2 non-canonical NF-kB pathway"/>
</dbReference>
<dbReference type="Reactome" id="R-BTA-5676590">
    <property type="pathway name" value="NIK--&gt;noncanonical NF-kB signaling"/>
</dbReference>
<dbReference type="Reactome" id="R-BTA-5687128">
    <property type="pathway name" value="MAPK6/MAPK4 signaling"/>
</dbReference>
<dbReference type="Reactome" id="R-BTA-5689603">
    <property type="pathway name" value="UCH proteinases"/>
</dbReference>
<dbReference type="Reactome" id="R-BTA-5689880">
    <property type="pathway name" value="Ub-specific processing proteases"/>
</dbReference>
<dbReference type="Reactome" id="R-BTA-68867">
    <property type="pathway name" value="Assembly of the pre-replicative complex"/>
</dbReference>
<dbReference type="Reactome" id="R-BTA-68949">
    <property type="pathway name" value="Orc1 removal from chromatin"/>
</dbReference>
<dbReference type="Reactome" id="R-BTA-69017">
    <property type="pathway name" value="CDK-mediated phosphorylation and removal of Cdc6"/>
</dbReference>
<dbReference type="Reactome" id="R-BTA-69481">
    <property type="pathway name" value="G2/M Checkpoints"/>
</dbReference>
<dbReference type="Reactome" id="R-BTA-69601">
    <property type="pathway name" value="Ubiquitin Mediated Degradation of Phosphorylated Cdc25A"/>
</dbReference>
<dbReference type="Reactome" id="R-BTA-75815">
    <property type="pathway name" value="Ubiquitin-dependent degradation of Cyclin D"/>
</dbReference>
<dbReference type="Reactome" id="R-BTA-8852276">
    <property type="pathway name" value="The role of GTSE1 in G2/M progression after G2 checkpoint"/>
</dbReference>
<dbReference type="Reactome" id="R-BTA-8854050">
    <property type="pathway name" value="FBXL7 down-regulates AURKA during mitotic entry and in early mitosis"/>
</dbReference>
<dbReference type="Reactome" id="R-BTA-8939236">
    <property type="pathway name" value="RUNX1 regulates transcription of genes involved in differentiation of HSCs"/>
</dbReference>
<dbReference type="Reactome" id="R-BTA-8939902">
    <property type="pathway name" value="Regulation of RUNX2 expression and activity"/>
</dbReference>
<dbReference type="Reactome" id="R-BTA-8941858">
    <property type="pathway name" value="Regulation of RUNX3 expression and activity"/>
</dbReference>
<dbReference type="Reactome" id="R-BTA-8948751">
    <property type="pathway name" value="Regulation of PTEN stability and activity"/>
</dbReference>
<dbReference type="Reactome" id="R-BTA-8951664">
    <property type="pathway name" value="Neddylation"/>
</dbReference>
<dbReference type="Reactome" id="R-BTA-9020702">
    <property type="pathway name" value="Interleukin-1 signaling"/>
</dbReference>
<dbReference type="Reactome" id="R-BTA-9755511">
    <property type="pathway name" value="KEAP1-NFE2L2 pathway"/>
</dbReference>
<dbReference type="Reactome" id="R-BTA-9762114">
    <property type="pathway name" value="GSK3B and BTRC:CUL1-mediated-degradation of NFE2L2"/>
</dbReference>
<dbReference type="Reactome" id="R-BTA-983168">
    <property type="pathway name" value="Antigen processing: Ubiquitination &amp; Proteasome degradation"/>
</dbReference>
<dbReference type="Reactome" id="R-BTA-9907900">
    <property type="pathway name" value="Proteasome assembly"/>
</dbReference>
<dbReference type="Proteomes" id="UP000009136">
    <property type="component" value="Chromosome 19"/>
</dbReference>
<dbReference type="Bgee" id="ENSBTAG00000021061">
    <property type="expression patterns" value="Expressed in laryngeal cartilage and 105 other cell types or tissues"/>
</dbReference>
<dbReference type="GO" id="GO:0005737">
    <property type="term" value="C:cytoplasm"/>
    <property type="evidence" value="ECO:0000250"/>
    <property type="project" value="UniProtKB"/>
</dbReference>
<dbReference type="GO" id="GO:0031410">
    <property type="term" value="C:cytoplasmic vesicle"/>
    <property type="evidence" value="ECO:0007669"/>
    <property type="project" value="Ensembl"/>
</dbReference>
<dbReference type="GO" id="GO:0005829">
    <property type="term" value="C:cytosol"/>
    <property type="evidence" value="ECO:0000304"/>
    <property type="project" value="Reactome"/>
</dbReference>
<dbReference type="GO" id="GO:0005634">
    <property type="term" value="C:nucleus"/>
    <property type="evidence" value="ECO:0000250"/>
    <property type="project" value="UniProtKB"/>
</dbReference>
<dbReference type="GO" id="GO:0022624">
    <property type="term" value="C:proteasome accessory complex"/>
    <property type="evidence" value="ECO:0000250"/>
    <property type="project" value="UniProtKB"/>
</dbReference>
<dbReference type="GO" id="GO:0000502">
    <property type="term" value="C:proteasome complex"/>
    <property type="evidence" value="ECO:0000250"/>
    <property type="project" value="UniProtKB"/>
</dbReference>
<dbReference type="GO" id="GO:0008540">
    <property type="term" value="C:proteasome regulatory particle, base subcomplex"/>
    <property type="evidence" value="ECO:0000318"/>
    <property type="project" value="GO_Central"/>
</dbReference>
<dbReference type="GO" id="GO:0005524">
    <property type="term" value="F:ATP binding"/>
    <property type="evidence" value="ECO:0007669"/>
    <property type="project" value="UniProtKB-KW"/>
</dbReference>
<dbReference type="GO" id="GO:0016887">
    <property type="term" value="F:ATP hydrolysis activity"/>
    <property type="evidence" value="ECO:0007669"/>
    <property type="project" value="InterPro"/>
</dbReference>
<dbReference type="GO" id="GO:0140297">
    <property type="term" value="F:DNA-binding transcription factor binding"/>
    <property type="evidence" value="ECO:0007669"/>
    <property type="project" value="Ensembl"/>
</dbReference>
<dbReference type="GO" id="GO:0140296">
    <property type="term" value="F:general transcription initiation factor binding"/>
    <property type="evidence" value="ECO:0000250"/>
    <property type="project" value="UniProtKB"/>
</dbReference>
<dbReference type="GO" id="GO:0036402">
    <property type="term" value="F:proteasome-activating activity"/>
    <property type="evidence" value="ECO:0000318"/>
    <property type="project" value="GO_Central"/>
</dbReference>
<dbReference type="GO" id="GO:0031531">
    <property type="term" value="F:thyrotropin-releasing hormone receptor binding"/>
    <property type="evidence" value="ECO:0000250"/>
    <property type="project" value="UniProtKB"/>
</dbReference>
<dbReference type="GO" id="GO:0045892">
    <property type="term" value="P:negative regulation of DNA-templated transcription"/>
    <property type="evidence" value="ECO:0007669"/>
    <property type="project" value="Ensembl"/>
</dbReference>
<dbReference type="GO" id="GO:0043161">
    <property type="term" value="P:proteasome-mediated ubiquitin-dependent protein catabolic process"/>
    <property type="evidence" value="ECO:0000250"/>
    <property type="project" value="UniProtKB"/>
</dbReference>
<dbReference type="GO" id="GO:0006357">
    <property type="term" value="P:regulation of transcription by RNA polymerase II"/>
    <property type="evidence" value="ECO:0007669"/>
    <property type="project" value="Ensembl"/>
</dbReference>
<dbReference type="CDD" id="cd19502">
    <property type="entry name" value="RecA-like_PAN_like"/>
    <property type="match status" value="1"/>
</dbReference>
<dbReference type="FunFam" id="1.10.8.60:FF:000006">
    <property type="entry name" value="26S protease regulatory subunit 8"/>
    <property type="match status" value="1"/>
</dbReference>
<dbReference type="FunFam" id="2.40.50.140:FF:000044">
    <property type="entry name" value="26S protease regulatory subunit 8"/>
    <property type="match status" value="1"/>
</dbReference>
<dbReference type="FunFam" id="3.40.50.300:FF:000030">
    <property type="entry name" value="26S protease regulatory subunit 8"/>
    <property type="match status" value="1"/>
</dbReference>
<dbReference type="Gene3D" id="1.10.8.60">
    <property type="match status" value="1"/>
</dbReference>
<dbReference type="Gene3D" id="2.40.50.140">
    <property type="entry name" value="Nucleic acid-binding proteins"/>
    <property type="match status" value="1"/>
</dbReference>
<dbReference type="Gene3D" id="3.40.50.300">
    <property type="entry name" value="P-loop containing nucleotide triphosphate hydrolases"/>
    <property type="match status" value="1"/>
</dbReference>
<dbReference type="InterPro" id="IPR050221">
    <property type="entry name" value="26S_Proteasome_ATPase"/>
</dbReference>
<dbReference type="InterPro" id="IPR003593">
    <property type="entry name" value="AAA+_ATPase"/>
</dbReference>
<dbReference type="InterPro" id="IPR041569">
    <property type="entry name" value="AAA_lid_3"/>
</dbReference>
<dbReference type="InterPro" id="IPR003959">
    <property type="entry name" value="ATPase_AAA_core"/>
</dbReference>
<dbReference type="InterPro" id="IPR003960">
    <property type="entry name" value="ATPase_AAA_CS"/>
</dbReference>
<dbReference type="InterPro" id="IPR012340">
    <property type="entry name" value="NA-bd_OB-fold"/>
</dbReference>
<dbReference type="InterPro" id="IPR027417">
    <property type="entry name" value="P-loop_NTPase"/>
</dbReference>
<dbReference type="InterPro" id="IPR032501">
    <property type="entry name" value="Prot_ATP_ID_OB_2nd"/>
</dbReference>
<dbReference type="PANTHER" id="PTHR23073">
    <property type="entry name" value="26S PROTEASOME REGULATORY SUBUNIT"/>
    <property type="match status" value="1"/>
</dbReference>
<dbReference type="Pfam" id="PF00004">
    <property type="entry name" value="AAA"/>
    <property type="match status" value="1"/>
</dbReference>
<dbReference type="Pfam" id="PF17862">
    <property type="entry name" value="AAA_lid_3"/>
    <property type="match status" value="1"/>
</dbReference>
<dbReference type="Pfam" id="PF16450">
    <property type="entry name" value="Prot_ATP_ID_OB_C"/>
    <property type="match status" value="1"/>
</dbReference>
<dbReference type="SMART" id="SM00382">
    <property type="entry name" value="AAA"/>
    <property type="match status" value="1"/>
</dbReference>
<dbReference type="SUPFAM" id="SSF52540">
    <property type="entry name" value="P-loop containing nucleoside triphosphate hydrolases"/>
    <property type="match status" value="1"/>
</dbReference>
<dbReference type="PROSITE" id="PS00674">
    <property type="entry name" value="AAA"/>
    <property type="match status" value="1"/>
</dbReference>
<evidence type="ECO:0000250" key="1">
    <source>
        <dbReference type="UniProtKB" id="P62195"/>
    </source>
</evidence>
<evidence type="ECO:0000250" key="2">
    <source>
        <dbReference type="UniProtKB" id="P62196"/>
    </source>
</evidence>
<evidence type="ECO:0000250" key="3">
    <source>
        <dbReference type="UniProtKB" id="P62198"/>
    </source>
</evidence>
<evidence type="ECO:0000255" key="4"/>
<evidence type="ECO:0000305" key="5"/>
<name>PRS8_BOVIN</name>
<protein>
    <recommendedName>
        <fullName>26S proteasome regulatory subunit 8</fullName>
    </recommendedName>
    <alternativeName>
        <fullName>26S proteasome AAA-ATPase subunit RPT6</fullName>
    </alternativeName>
    <alternativeName>
        <fullName>Proteasome 26S subunit ATPase 5</fullName>
    </alternativeName>
    <alternativeName>
        <fullName>Proteasome subunit p45</fullName>
    </alternativeName>
    <alternativeName>
        <fullName>p45/SUG</fullName>
    </alternativeName>
</protein>
<organism>
    <name type="scientific">Bos taurus</name>
    <name type="common">Bovine</name>
    <dbReference type="NCBI Taxonomy" id="9913"/>
    <lineage>
        <taxon>Eukaryota</taxon>
        <taxon>Metazoa</taxon>
        <taxon>Chordata</taxon>
        <taxon>Craniata</taxon>
        <taxon>Vertebrata</taxon>
        <taxon>Euteleostomi</taxon>
        <taxon>Mammalia</taxon>
        <taxon>Eutheria</taxon>
        <taxon>Laurasiatheria</taxon>
        <taxon>Artiodactyla</taxon>
        <taxon>Ruminantia</taxon>
        <taxon>Pecora</taxon>
        <taxon>Bovidae</taxon>
        <taxon>Bovinae</taxon>
        <taxon>Bos</taxon>
    </lineage>
</organism>
<sequence>MALDGPEQMELEEGKAGSGLRQYYLSKIEELQLIVNDKSQNLRRLQAQRNELNAKVRLLREELQLLQEQGSYVGEVVRAMDKKKVLVKVHPEGKFVVDVDKNIDINDVTPNCRVALRNDSYTLHKILPNKVDPLVSLMMVEKVPDSTYEMIGGLDKQIKEIKEVIELPVKHPELFEALGIAQPKGVLLYGPPGTGKTLLARAVAHHTDCTFIRVSGSELVQKFIGEGARMVRELFVMAREHAPSIIFMDEIDSIGSSRLEGGSGGDSEVQRTMLELLNQLDGFEATKNIKVIMATNRIDILDSALLRPGRIDRKIEFPPPNEEARLDILKIHSRKMNLTRGINLRKIAELMPGASGAEVKGVCTEAGMYALRERRVHVTQEDFEMAVAKVMQKDSEKNMSIKKLWK</sequence>
<gene>
    <name type="primary">PSMC5</name>
    <name type="synonym">SUG1</name>
</gene>
<comment type="function">
    <text evidence="1">Component of the 26S proteasome, a multiprotein complex involved in the ATP-dependent degradation of ubiquitinated proteins. This complex plays a key role in the maintenance of protein homeostasis by removing misfolded or damaged proteins, which could impair cellular functions, and by removing proteins whose functions are no longer required. Therefore, the proteasome participates in numerous cellular processes, including cell cycle progression, apoptosis, or DNA damage repair. PSMC5 belongs to the heterohexameric ring of AAA (ATPases associated with diverse cellular activities) proteins that unfolds ubiquitinated target proteins that are concurrently translocated into a proteolytic chamber and degraded into peptides.</text>
</comment>
<comment type="subunit">
    <text evidence="1 2 3">Component of the 19S proteasome regulatory particle complex (By similarity). The 26S proteasome consists of a 20S core particle (CP) and two 19S regulatory subunits (RP) (By similarity). The regulatory particle is made of a lid composed of 9 subunits, a base containing 6 ATPases including PSMC5 and few additional components (By similarity). Component of a complex with USP49 and RUVBL1 (By similarity). Interacts with PRPF19 (By similarity). Interacts with TRIM5 (By similarity). Interacts with NDC80 (By similarity). Interacts with PAAF1 (By similarity). Interacts, in vitro, with the thyroid hormone receptor (in a thyroid hormone T3-dependent manner) and with retinoid X receptor (RXR) (By similarity). Interacts with ERCC6 (By similarity).</text>
</comment>
<comment type="subcellular location">
    <subcellularLocation>
        <location evidence="1">Cytoplasm</location>
    </subcellularLocation>
    <subcellularLocation>
        <location evidence="1">Nucleus</location>
    </subcellularLocation>
</comment>
<comment type="similarity">
    <text evidence="5">Belongs to the AAA ATPase family.</text>
</comment>
<proteinExistence type="evidence at transcript level"/>
<keyword id="KW-0007">Acetylation</keyword>
<keyword id="KW-0067">ATP-binding</keyword>
<keyword id="KW-0963">Cytoplasm</keyword>
<keyword id="KW-0547">Nucleotide-binding</keyword>
<keyword id="KW-0539">Nucleus</keyword>
<keyword id="KW-0597">Phosphoprotein</keyword>
<keyword id="KW-0647">Proteasome</keyword>
<keyword id="KW-1185">Reference proteome</keyword>